<comment type="subcellular location">
    <subcellularLocation>
        <location evidence="3">Cell membrane</location>
        <topology evidence="3">Multi-pass membrane protein</topology>
    </subcellularLocation>
</comment>
<comment type="similarity">
    <text evidence="3">Belongs to the ATP-dependent AMP-binding enzyme family.</text>
</comment>
<feature type="chain" id="PRO_0000426840" description="Putative fatty-acid--CoA ligase fadD25">
    <location>
        <begin position="1"/>
        <end position="583"/>
    </location>
</feature>
<feature type="transmembrane region" description="Helical" evidence="1">
    <location>
        <begin position="77"/>
        <end position="97"/>
    </location>
</feature>
<feature type="transmembrane region" description="Helical" evidence="1">
    <location>
        <begin position="109"/>
        <end position="129"/>
    </location>
</feature>
<feature type="transmembrane region" description="Helical" evidence="1">
    <location>
        <begin position="229"/>
        <end position="249"/>
    </location>
</feature>
<feature type="region of interest" description="Disordered" evidence="2">
    <location>
        <begin position="353"/>
        <end position="375"/>
    </location>
</feature>
<gene>
    <name type="primary">fadD25</name>
    <name type="ordered locus">MT1572</name>
</gene>
<name>FAD25_MYCTO</name>
<organism>
    <name type="scientific">Mycobacterium tuberculosis (strain CDC 1551 / Oshkosh)</name>
    <dbReference type="NCBI Taxonomy" id="83331"/>
    <lineage>
        <taxon>Bacteria</taxon>
        <taxon>Bacillati</taxon>
        <taxon>Actinomycetota</taxon>
        <taxon>Actinomycetes</taxon>
        <taxon>Mycobacteriales</taxon>
        <taxon>Mycobacteriaceae</taxon>
        <taxon>Mycobacterium</taxon>
        <taxon>Mycobacterium tuberculosis complex</taxon>
    </lineage>
</organism>
<proteinExistence type="inferred from homology"/>
<accession>P9WQ44</accession>
<accession>L0T8I2</accession>
<accession>Q50586</accession>
<sequence length="583" mass="63142">MSVVESSLPGVLRERASFQPNDKALTFIDYERSWDGVEETLTWSQLYRRTLNLAAQLREHGSTGDRALILAPQSLDYVVSFIASLQAGIVAVPLSIPQGGAHDERTVSVFADTAPAIVLTASSVVDNVVEYVQPQPGQNAPAVIEVDRLDLDARPSSGSRSAAHGHPDILYLQYTSGSTRTPAGVMVSNKNLFANFEQIMTSYYGVYGKVAPPGSTVVSWLPFYHDMGFVLGLILPILAGIPAVLTSPIGFLQRPARWIQMLASNTLAFTAAPNFAFDLASRKTKDEDMEGLDLGGVHGILNGSERVQPVTLKRFIDRFAPFNLDPKAIRPSYGMAEATVYVATRKAGQPPKIVQFDPQKLPDGQAERTESDGGTPLVSYGIVDTQLVRIVDPDTGIERPAGTIGEIWVHGDNVAIGYWQKPEATERTFSATIVNPSEGTPAGPWLRTGDSGFLSEGELFIMGRIKDLLIVYGRNHSPDDIEATIQTISPGRCAAIAVSEHGAEKLVAIIELKKKDESDDEAAERLGFVKREVTSAISKSHGLSVADLVLVSPGSIPITTSGKIRRAQCVELYRQDEFTRLDA</sequence>
<protein>
    <recommendedName>
        <fullName>Putative fatty-acid--CoA ligase fadD25</fullName>
        <ecNumber>6.2.1.-</ecNumber>
    </recommendedName>
    <alternativeName>
        <fullName>Acyl-CoA synthetase</fullName>
    </alternativeName>
</protein>
<evidence type="ECO:0000255" key="1"/>
<evidence type="ECO:0000256" key="2">
    <source>
        <dbReference type="SAM" id="MobiDB-lite"/>
    </source>
</evidence>
<evidence type="ECO:0000305" key="3"/>
<keyword id="KW-1003">Cell membrane</keyword>
<keyword id="KW-0276">Fatty acid metabolism</keyword>
<keyword id="KW-0436">Ligase</keyword>
<keyword id="KW-0443">Lipid metabolism</keyword>
<keyword id="KW-0472">Membrane</keyword>
<keyword id="KW-1185">Reference proteome</keyword>
<keyword id="KW-0812">Transmembrane</keyword>
<keyword id="KW-1133">Transmembrane helix</keyword>
<reference key="1">
    <citation type="journal article" date="2002" name="J. Bacteriol.">
        <title>Whole-genome comparison of Mycobacterium tuberculosis clinical and laboratory strains.</title>
        <authorList>
            <person name="Fleischmann R.D."/>
            <person name="Alland D."/>
            <person name="Eisen J.A."/>
            <person name="Carpenter L."/>
            <person name="White O."/>
            <person name="Peterson J.D."/>
            <person name="DeBoy R.T."/>
            <person name="Dodson R.J."/>
            <person name="Gwinn M.L."/>
            <person name="Haft D.H."/>
            <person name="Hickey E.K."/>
            <person name="Kolonay J.F."/>
            <person name="Nelson W.C."/>
            <person name="Umayam L.A."/>
            <person name="Ermolaeva M.D."/>
            <person name="Salzberg S.L."/>
            <person name="Delcher A."/>
            <person name="Utterback T.R."/>
            <person name="Weidman J.F."/>
            <person name="Khouri H.M."/>
            <person name="Gill J."/>
            <person name="Mikula A."/>
            <person name="Bishai W."/>
            <person name="Jacobs W.R. Jr."/>
            <person name="Venter J.C."/>
            <person name="Fraser C.M."/>
        </authorList>
    </citation>
    <scope>NUCLEOTIDE SEQUENCE [LARGE SCALE GENOMIC DNA]</scope>
    <source>
        <strain>CDC 1551 / Oshkosh</strain>
    </source>
</reference>
<dbReference type="EC" id="6.2.1.-"/>
<dbReference type="EMBL" id="AE000516">
    <property type="protein sequence ID" value="AAK45839.1"/>
    <property type="molecule type" value="Genomic_DNA"/>
</dbReference>
<dbReference type="PIR" id="A70723">
    <property type="entry name" value="A70723"/>
</dbReference>
<dbReference type="RefSeq" id="WP_003901187.1">
    <property type="nucleotide sequence ID" value="NZ_KK341227.1"/>
</dbReference>
<dbReference type="SMR" id="P9WQ44"/>
<dbReference type="GeneID" id="45425502"/>
<dbReference type="KEGG" id="mtc:MT1572"/>
<dbReference type="PATRIC" id="fig|83331.31.peg.1693"/>
<dbReference type="HOGENOM" id="CLU_000022_23_7_11"/>
<dbReference type="Proteomes" id="UP000001020">
    <property type="component" value="Chromosome"/>
</dbReference>
<dbReference type="GO" id="GO:0005886">
    <property type="term" value="C:plasma membrane"/>
    <property type="evidence" value="ECO:0007669"/>
    <property type="project" value="UniProtKB-SubCell"/>
</dbReference>
<dbReference type="GO" id="GO:0070566">
    <property type="term" value="F:adenylyltransferase activity"/>
    <property type="evidence" value="ECO:0007669"/>
    <property type="project" value="TreeGrafter"/>
</dbReference>
<dbReference type="GO" id="GO:0016874">
    <property type="term" value="F:ligase activity"/>
    <property type="evidence" value="ECO:0007669"/>
    <property type="project" value="UniProtKB-KW"/>
</dbReference>
<dbReference type="GO" id="GO:0071766">
    <property type="term" value="P:Actinobacterium-type cell wall biogenesis"/>
    <property type="evidence" value="ECO:0007669"/>
    <property type="project" value="UniProtKB-ARBA"/>
</dbReference>
<dbReference type="GO" id="GO:0006633">
    <property type="term" value="P:fatty acid biosynthetic process"/>
    <property type="evidence" value="ECO:0007669"/>
    <property type="project" value="TreeGrafter"/>
</dbReference>
<dbReference type="CDD" id="cd05931">
    <property type="entry name" value="FAAL"/>
    <property type="match status" value="1"/>
</dbReference>
<dbReference type="FunFam" id="3.30.300.30:FF:000016">
    <property type="entry name" value="Fatty-acid-CoA ligase FadD26"/>
    <property type="match status" value="1"/>
</dbReference>
<dbReference type="FunFam" id="3.40.50.12780:FF:000013">
    <property type="entry name" value="Long-chain-fatty-acid--AMP ligase FadD32"/>
    <property type="match status" value="1"/>
</dbReference>
<dbReference type="Gene3D" id="3.30.300.30">
    <property type="match status" value="1"/>
</dbReference>
<dbReference type="Gene3D" id="3.40.50.12780">
    <property type="entry name" value="N-terminal domain of ligase-like"/>
    <property type="match status" value="1"/>
</dbReference>
<dbReference type="InterPro" id="IPR025110">
    <property type="entry name" value="AMP-bd_C"/>
</dbReference>
<dbReference type="InterPro" id="IPR045851">
    <property type="entry name" value="AMP-bd_C_sf"/>
</dbReference>
<dbReference type="InterPro" id="IPR000873">
    <property type="entry name" value="AMP-dep_synth/lig_dom"/>
</dbReference>
<dbReference type="InterPro" id="IPR042099">
    <property type="entry name" value="ANL_N_sf"/>
</dbReference>
<dbReference type="InterPro" id="IPR040097">
    <property type="entry name" value="FAAL/FAAC"/>
</dbReference>
<dbReference type="NCBIfam" id="NF004509">
    <property type="entry name" value="PRK05850.1"/>
    <property type="match status" value="1"/>
</dbReference>
<dbReference type="PANTHER" id="PTHR22754:SF32">
    <property type="entry name" value="DISCO-INTERACTING PROTEIN 2"/>
    <property type="match status" value="1"/>
</dbReference>
<dbReference type="PANTHER" id="PTHR22754">
    <property type="entry name" value="DISCO-INTERACTING PROTEIN 2 DIP2 -RELATED"/>
    <property type="match status" value="1"/>
</dbReference>
<dbReference type="Pfam" id="PF00501">
    <property type="entry name" value="AMP-binding"/>
    <property type="match status" value="1"/>
</dbReference>
<dbReference type="Pfam" id="PF23024">
    <property type="entry name" value="AMP-dom_DIP2-like"/>
    <property type="match status" value="1"/>
</dbReference>
<dbReference type="SUPFAM" id="SSF56801">
    <property type="entry name" value="Acetyl-CoA synthetase-like"/>
    <property type="match status" value="1"/>
</dbReference>